<dbReference type="EC" id="2.3.1.225" evidence="5 6 7"/>
<dbReference type="EMBL" id="AY166674">
    <property type="protein sequence ID" value="AAO27361.1"/>
    <property type="molecule type" value="mRNA"/>
</dbReference>
<dbReference type="EMBL" id="AK020293">
    <property type="protein sequence ID" value="BAB32059.1"/>
    <property type="molecule type" value="mRNA"/>
</dbReference>
<dbReference type="EMBL" id="AL671005">
    <property type="status" value="NOT_ANNOTATED_CDS"/>
    <property type="molecule type" value="Genomic_DNA"/>
</dbReference>
<dbReference type="EMBL" id="BC043110">
    <property type="protein sequence ID" value="AAH43110.1"/>
    <property type="molecule type" value="mRNA"/>
</dbReference>
<dbReference type="CCDS" id="CCDS18294.1"/>
<dbReference type="RefSeq" id="NP_080923.2">
    <property type="nucleotide sequence ID" value="NM_026647.3"/>
</dbReference>
<dbReference type="RefSeq" id="XP_006538279.1">
    <property type="nucleotide sequence ID" value="XM_006538216.4"/>
</dbReference>
<dbReference type="RefSeq" id="XP_011248395.1">
    <property type="nucleotide sequence ID" value="XM_011250093.4"/>
</dbReference>
<dbReference type="RefSeq" id="XP_011248396.1">
    <property type="nucleotide sequence ID" value="XM_011250094.4"/>
</dbReference>
<dbReference type="RefSeq" id="XP_017175861.1">
    <property type="nucleotide sequence ID" value="XM_017320372.1"/>
</dbReference>
<dbReference type="RefSeq" id="XP_017175862.1">
    <property type="nucleotide sequence ID" value="XM_017320373.1"/>
</dbReference>
<dbReference type="RefSeq" id="XP_036020274.1">
    <property type="nucleotide sequence ID" value="XM_036164381.1"/>
</dbReference>
<dbReference type="RefSeq" id="XP_036020275.1">
    <property type="nucleotide sequence ID" value="XM_036164382.1"/>
</dbReference>
<dbReference type="RefSeq" id="XP_036020276.1">
    <property type="nucleotide sequence ID" value="XM_036164383.1"/>
</dbReference>
<dbReference type="RefSeq" id="XP_036020277.1">
    <property type="nucleotide sequence ID" value="XM_036164384.1"/>
</dbReference>
<dbReference type="RefSeq" id="XP_036020278.1">
    <property type="nucleotide sequence ID" value="XM_036164385.1"/>
</dbReference>
<dbReference type="SMR" id="Q9D270"/>
<dbReference type="BioGRID" id="212771">
    <property type="interactions" value="2"/>
</dbReference>
<dbReference type="FunCoup" id="Q9D270">
    <property type="interactions" value="1954"/>
</dbReference>
<dbReference type="STRING" id="10090.ENSMUSP00000030110"/>
<dbReference type="PhosphoSitePlus" id="Q9D270"/>
<dbReference type="SwissPalm" id="Q9D270"/>
<dbReference type="PaxDb" id="10090-ENSMUSP00000030110"/>
<dbReference type="PeptideAtlas" id="Q9D270"/>
<dbReference type="ProteomicsDB" id="274973"/>
<dbReference type="Pumba" id="Q9D270"/>
<dbReference type="Antibodypedia" id="42748">
    <property type="antibodies" value="113 antibodies from 19 providers"/>
</dbReference>
<dbReference type="DNASU" id="68268"/>
<dbReference type="Ensembl" id="ENSMUST00000030110.15">
    <property type="protein sequence ID" value="ENSMUSP00000030110.9"/>
    <property type="gene ID" value="ENSMUSG00000028403.16"/>
</dbReference>
<dbReference type="Ensembl" id="ENSMUST00000107239.8">
    <property type="protein sequence ID" value="ENSMUSP00000102859.2"/>
    <property type="gene ID" value="ENSMUSG00000028403.16"/>
</dbReference>
<dbReference type="GeneID" id="68268"/>
<dbReference type="KEGG" id="mmu:68268"/>
<dbReference type="UCSC" id="uc008tkj.2">
    <property type="organism name" value="mouse"/>
</dbReference>
<dbReference type="AGR" id="MGI:1915518"/>
<dbReference type="CTD" id="340481"/>
<dbReference type="MGI" id="MGI:1915518">
    <property type="gene designation" value="Zdhhc21"/>
</dbReference>
<dbReference type="VEuPathDB" id="HostDB:ENSMUSG00000028403"/>
<dbReference type="eggNOG" id="KOG1311">
    <property type="taxonomic scope" value="Eukaryota"/>
</dbReference>
<dbReference type="GeneTree" id="ENSGT00940000158006"/>
<dbReference type="HOGENOM" id="CLU_048061_3_0_1"/>
<dbReference type="InParanoid" id="Q9D270"/>
<dbReference type="OMA" id="HGERELW"/>
<dbReference type="OrthoDB" id="331948at2759"/>
<dbReference type="PhylomeDB" id="Q9D270"/>
<dbReference type="TreeFam" id="TF319798"/>
<dbReference type="Reactome" id="R-MMU-203615">
    <property type="pathway name" value="eNOS activation"/>
</dbReference>
<dbReference type="Reactome" id="R-MMU-9009391">
    <property type="pathway name" value="Extra-nuclear estrogen signaling"/>
</dbReference>
<dbReference type="BioGRID-ORCS" id="68268">
    <property type="hits" value="5 hits in 78 CRISPR screens"/>
</dbReference>
<dbReference type="ChiTaRS" id="Zdhhc21">
    <property type="organism name" value="mouse"/>
</dbReference>
<dbReference type="PRO" id="PR:Q9D270"/>
<dbReference type="Proteomes" id="UP000000589">
    <property type="component" value="Chromosome 4"/>
</dbReference>
<dbReference type="RNAct" id="Q9D270">
    <property type="molecule type" value="protein"/>
</dbReference>
<dbReference type="Bgee" id="ENSMUSG00000028403">
    <property type="expression patterns" value="Expressed in otolith organ and 225 other cell types or tissues"/>
</dbReference>
<dbReference type="ExpressionAtlas" id="Q9D270">
    <property type="expression patterns" value="baseline and differential"/>
</dbReference>
<dbReference type="GO" id="GO:0005794">
    <property type="term" value="C:Golgi apparatus"/>
    <property type="evidence" value="ECO:0000250"/>
    <property type="project" value="UniProtKB"/>
</dbReference>
<dbReference type="GO" id="GO:0000139">
    <property type="term" value="C:Golgi membrane"/>
    <property type="evidence" value="ECO:0007669"/>
    <property type="project" value="UniProtKB-SubCell"/>
</dbReference>
<dbReference type="GO" id="GO:0005886">
    <property type="term" value="C:plasma membrane"/>
    <property type="evidence" value="ECO:0007669"/>
    <property type="project" value="UniProtKB-SubCell"/>
</dbReference>
<dbReference type="GO" id="GO:0016409">
    <property type="term" value="F:palmitoyltransferase activity"/>
    <property type="evidence" value="ECO:0000314"/>
    <property type="project" value="MGI"/>
</dbReference>
<dbReference type="GO" id="GO:0019706">
    <property type="term" value="F:protein-cysteine S-palmitoyltransferase activity"/>
    <property type="evidence" value="ECO:0000315"/>
    <property type="project" value="UniProtKB"/>
</dbReference>
<dbReference type="GO" id="GO:0071875">
    <property type="term" value="P:adrenergic receptor signaling pathway"/>
    <property type="evidence" value="ECO:0000315"/>
    <property type="project" value="UniProtKB"/>
</dbReference>
<dbReference type="GO" id="GO:0001942">
    <property type="term" value="P:hair follicle development"/>
    <property type="evidence" value="ECO:0000315"/>
    <property type="project" value="MGI"/>
</dbReference>
<dbReference type="GO" id="GO:0018230">
    <property type="term" value="P:peptidyl-L-cysteine S-palmitoylation"/>
    <property type="evidence" value="ECO:0000315"/>
    <property type="project" value="UniProtKB"/>
</dbReference>
<dbReference type="GO" id="GO:1903140">
    <property type="term" value="P:regulation of establishment of endothelial barrier"/>
    <property type="evidence" value="ECO:0000315"/>
    <property type="project" value="UniProtKB"/>
</dbReference>
<dbReference type="GO" id="GO:1904997">
    <property type="term" value="P:regulation of leukocyte adhesion to arterial endothelial cell"/>
    <property type="evidence" value="ECO:0000315"/>
    <property type="project" value="UniProtKB"/>
</dbReference>
<dbReference type="GO" id="GO:0003056">
    <property type="term" value="P:regulation of vascular associated smooth muscle contraction"/>
    <property type="evidence" value="ECO:0000315"/>
    <property type="project" value="UniProtKB"/>
</dbReference>
<dbReference type="GO" id="GO:0048733">
    <property type="term" value="P:sebaceous gland development"/>
    <property type="evidence" value="ECO:0000315"/>
    <property type="project" value="MGI"/>
</dbReference>
<dbReference type="InterPro" id="IPR001594">
    <property type="entry name" value="Palmitoyltrfase_DHHC"/>
</dbReference>
<dbReference type="InterPro" id="IPR039859">
    <property type="entry name" value="PFA4/ZDH16/20/ERF2-like"/>
</dbReference>
<dbReference type="PANTHER" id="PTHR12246">
    <property type="entry name" value="PALMITOYLTRANSFERASE ZDHHC16"/>
    <property type="match status" value="1"/>
</dbReference>
<dbReference type="Pfam" id="PF01529">
    <property type="entry name" value="DHHC"/>
    <property type="match status" value="1"/>
</dbReference>
<dbReference type="PROSITE" id="PS50216">
    <property type="entry name" value="DHHC"/>
    <property type="match status" value="1"/>
</dbReference>
<accession>Q9D270</accession>
<accession>Q6EMK1</accession>
<accession>Q80XQ3</accession>
<reference key="1">
    <citation type="journal article" date="2004" name="J. Neurosci.">
        <title>The gamma2 subunit of GABA(A) receptors is a substrate for palmitoylation by GODZ.</title>
        <authorList>
            <person name="Keller C.A."/>
            <person name="Yuan X."/>
            <person name="Panzanelli P."/>
            <person name="Martin M.L."/>
            <person name="Alldred M."/>
            <person name="Sassoe-Pognetto M."/>
            <person name="Luescher B."/>
        </authorList>
    </citation>
    <scope>NUCLEOTIDE SEQUENCE [MRNA]</scope>
    <source>
        <strain>C57BL/6J</strain>
        <tissue>Cecum</tissue>
    </source>
</reference>
<reference key="2">
    <citation type="journal article" date="2005" name="Science">
        <title>The transcriptional landscape of the mammalian genome.</title>
        <authorList>
            <person name="Carninci P."/>
            <person name="Kasukawa T."/>
            <person name="Katayama S."/>
            <person name="Gough J."/>
            <person name="Frith M.C."/>
            <person name="Maeda N."/>
            <person name="Oyama R."/>
            <person name="Ravasi T."/>
            <person name="Lenhard B."/>
            <person name="Wells C."/>
            <person name="Kodzius R."/>
            <person name="Shimokawa K."/>
            <person name="Bajic V.B."/>
            <person name="Brenner S.E."/>
            <person name="Batalov S."/>
            <person name="Forrest A.R."/>
            <person name="Zavolan M."/>
            <person name="Davis M.J."/>
            <person name="Wilming L.G."/>
            <person name="Aidinis V."/>
            <person name="Allen J.E."/>
            <person name="Ambesi-Impiombato A."/>
            <person name="Apweiler R."/>
            <person name="Aturaliya R.N."/>
            <person name="Bailey T.L."/>
            <person name="Bansal M."/>
            <person name="Baxter L."/>
            <person name="Beisel K.W."/>
            <person name="Bersano T."/>
            <person name="Bono H."/>
            <person name="Chalk A.M."/>
            <person name="Chiu K.P."/>
            <person name="Choudhary V."/>
            <person name="Christoffels A."/>
            <person name="Clutterbuck D.R."/>
            <person name="Crowe M.L."/>
            <person name="Dalla E."/>
            <person name="Dalrymple B.P."/>
            <person name="de Bono B."/>
            <person name="Della Gatta G."/>
            <person name="di Bernardo D."/>
            <person name="Down T."/>
            <person name="Engstrom P."/>
            <person name="Fagiolini M."/>
            <person name="Faulkner G."/>
            <person name="Fletcher C.F."/>
            <person name="Fukushima T."/>
            <person name="Furuno M."/>
            <person name="Futaki S."/>
            <person name="Gariboldi M."/>
            <person name="Georgii-Hemming P."/>
            <person name="Gingeras T.R."/>
            <person name="Gojobori T."/>
            <person name="Green R.E."/>
            <person name="Gustincich S."/>
            <person name="Harbers M."/>
            <person name="Hayashi Y."/>
            <person name="Hensch T.K."/>
            <person name="Hirokawa N."/>
            <person name="Hill D."/>
            <person name="Huminiecki L."/>
            <person name="Iacono M."/>
            <person name="Ikeo K."/>
            <person name="Iwama A."/>
            <person name="Ishikawa T."/>
            <person name="Jakt M."/>
            <person name="Kanapin A."/>
            <person name="Katoh M."/>
            <person name="Kawasawa Y."/>
            <person name="Kelso J."/>
            <person name="Kitamura H."/>
            <person name="Kitano H."/>
            <person name="Kollias G."/>
            <person name="Krishnan S.P."/>
            <person name="Kruger A."/>
            <person name="Kummerfeld S.K."/>
            <person name="Kurochkin I.V."/>
            <person name="Lareau L.F."/>
            <person name="Lazarevic D."/>
            <person name="Lipovich L."/>
            <person name="Liu J."/>
            <person name="Liuni S."/>
            <person name="McWilliam S."/>
            <person name="Madan Babu M."/>
            <person name="Madera M."/>
            <person name="Marchionni L."/>
            <person name="Matsuda H."/>
            <person name="Matsuzawa S."/>
            <person name="Miki H."/>
            <person name="Mignone F."/>
            <person name="Miyake S."/>
            <person name="Morris K."/>
            <person name="Mottagui-Tabar S."/>
            <person name="Mulder N."/>
            <person name="Nakano N."/>
            <person name="Nakauchi H."/>
            <person name="Ng P."/>
            <person name="Nilsson R."/>
            <person name="Nishiguchi S."/>
            <person name="Nishikawa S."/>
            <person name="Nori F."/>
            <person name="Ohara O."/>
            <person name="Okazaki Y."/>
            <person name="Orlando V."/>
            <person name="Pang K.C."/>
            <person name="Pavan W.J."/>
            <person name="Pavesi G."/>
            <person name="Pesole G."/>
            <person name="Petrovsky N."/>
            <person name="Piazza S."/>
            <person name="Reed J."/>
            <person name="Reid J.F."/>
            <person name="Ring B.Z."/>
            <person name="Ringwald M."/>
            <person name="Rost B."/>
            <person name="Ruan Y."/>
            <person name="Salzberg S.L."/>
            <person name="Sandelin A."/>
            <person name="Schneider C."/>
            <person name="Schoenbach C."/>
            <person name="Sekiguchi K."/>
            <person name="Semple C.A."/>
            <person name="Seno S."/>
            <person name="Sessa L."/>
            <person name="Sheng Y."/>
            <person name="Shibata Y."/>
            <person name="Shimada H."/>
            <person name="Shimada K."/>
            <person name="Silva D."/>
            <person name="Sinclair B."/>
            <person name="Sperling S."/>
            <person name="Stupka E."/>
            <person name="Sugiura K."/>
            <person name="Sultana R."/>
            <person name="Takenaka Y."/>
            <person name="Taki K."/>
            <person name="Tammoja K."/>
            <person name="Tan S.L."/>
            <person name="Tang S."/>
            <person name="Taylor M.S."/>
            <person name="Tegner J."/>
            <person name="Teichmann S.A."/>
            <person name="Ueda H.R."/>
            <person name="van Nimwegen E."/>
            <person name="Verardo R."/>
            <person name="Wei C.L."/>
            <person name="Yagi K."/>
            <person name="Yamanishi H."/>
            <person name="Zabarovsky E."/>
            <person name="Zhu S."/>
            <person name="Zimmer A."/>
            <person name="Hide W."/>
            <person name="Bult C."/>
            <person name="Grimmond S.M."/>
            <person name="Teasdale R.D."/>
            <person name="Liu E.T."/>
            <person name="Brusic V."/>
            <person name="Quackenbush J."/>
            <person name="Wahlestedt C."/>
            <person name="Mattick J.S."/>
            <person name="Hume D.A."/>
            <person name="Kai C."/>
            <person name="Sasaki D."/>
            <person name="Tomaru Y."/>
            <person name="Fukuda S."/>
            <person name="Kanamori-Katayama M."/>
            <person name="Suzuki M."/>
            <person name="Aoki J."/>
            <person name="Arakawa T."/>
            <person name="Iida J."/>
            <person name="Imamura K."/>
            <person name="Itoh M."/>
            <person name="Kato T."/>
            <person name="Kawaji H."/>
            <person name="Kawagashira N."/>
            <person name="Kawashima T."/>
            <person name="Kojima M."/>
            <person name="Kondo S."/>
            <person name="Konno H."/>
            <person name="Nakano K."/>
            <person name="Ninomiya N."/>
            <person name="Nishio T."/>
            <person name="Okada M."/>
            <person name="Plessy C."/>
            <person name="Shibata K."/>
            <person name="Shiraki T."/>
            <person name="Suzuki S."/>
            <person name="Tagami M."/>
            <person name="Waki K."/>
            <person name="Watahiki A."/>
            <person name="Okamura-Oho Y."/>
            <person name="Suzuki H."/>
            <person name="Kawai J."/>
            <person name="Hayashizaki Y."/>
        </authorList>
    </citation>
    <scope>NUCLEOTIDE SEQUENCE [LARGE SCALE MRNA]</scope>
    <source>
        <strain>C57BL/6J</strain>
        <tissue>Cecum</tissue>
    </source>
</reference>
<reference key="3">
    <citation type="journal article" date="2009" name="PLoS Biol.">
        <title>Lineage-specific biology revealed by a finished genome assembly of the mouse.</title>
        <authorList>
            <person name="Church D.M."/>
            <person name="Goodstadt L."/>
            <person name="Hillier L.W."/>
            <person name="Zody M.C."/>
            <person name="Goldstein S."/>
            <person name="She X."/>
            <person name="Bult C.J."/>
            <person name="Agarwala R."/>
            <person name="Cherry J.L."/>
            <person name="DiCuccio M."/>
            <person name="Hlavina W."/>
            <person name="Kapustin Y."/>
            <person name="Meric P."/>
            <person name="Maglott D."/>
            <person name="Birtle Z."/>
            <person name="Marques A.C."/>
            <person name="Graves T."/>
            <person name="Zhou S."/>
            <person name="Teague B."/>
            <person name="Potamousis K."/>
            <person name="Churas C."/>
            <person name="Place M."/>
            <person name="Herschleb J."/>
            <person name="Runnheim R."/>
            <person name="Forrest D."/>
            <person name="Amos-Landgraf J."/>
            <person name="Schwartz D.C."/>
            <person name="Cheng Z."/>
            <person name="Lindblad-Toh K."/>
            <person name="Eichler E.E."/>
            <person name="Ponting C.P."/>
        </authorList>
    </citation>
    <scope>NUCLEOTIDE SEQUENCE [LARGE SCALE GENOMIC DNA]</scope>
    <source>
        <strain>C57BL/6J</strain>
    </source>
</reference>
<reference key="4">
    <citation type="journal article" date="2004" name="Genome Res.">
        <title>The status, quality, and expansion of the NIH full-length cDNA project: the Mammalian Gene Collection (MGC).</title>
        <authorList>
            <consortium name="The MGC Project Team"/>
        </authorList>
    </citation>
    <scope>NUCLEOTIDE SEQUENCE [LARGE SCALE MRNA]</scope>
    <source>
        <strain>C57BL/6J</strain>
        <tissue>Brain</tissue>
    </source>
</reference>
<reference key="5">
    <citation type="journal article" date="2009" name="PLoS Genet.">
        <title>Palmitoylation regulates epidermal homeostasis and hair follicle differentiation.</title>
        <authorList>
            <person name="Mill P."/>
            <person name="Lee A.W."/>
            <person name="Fukata Y."/>
            <person name="Tsutsumi R."/>
            <person name="Fukata M."/>
            <person name="Keighren M."/>
            <person name="Porter R.M."/>
            <person name="McKie L."/>
            <person name="Smyth I."/>
            <person name="Jackson I.J."/>
        </authorList>
    </citation>
    <scope>FUNCTION</scope>
    <scope>CATALYTIC ACTIVITY</scope>
    <scope>SUBCELLULAR LOCATION</scope>
    <scope>TISSUE SPECIFICITY</scope>
    <scope>DEVELOPMENTAL STAGE</scope>
    <scope>INVOLVEMENT IN DEP</scope>
    <scope>MUTAGENESIS OF LEU-91; CYS-95; CYS-106; CYS-120 AND PHE-233</scope>
    <scope>ACTIVE SITE</scope>
</reference>
<reference key="6">
    <citation type="journal article" date="2010" name="Cell">
        <title>A tissue-specific atlas of mouse protein phosphorylation and expression.</title>
        <authorList>
            <person name="Huttlin E.L."/>
            <person name="Jedrychowski M.P."/>
            <person name="Elias J.E."/>
            <person name="Goswami T."/>
            <person name="Rad R."/>
            <person name="Beausoleil S.A."/>
            <person name="Villen J."/>
            <person name="Haas W."/>
            <person name="Sowa M.E."/>
            <person name="Gygi S.P."/>
        </authorList>
    </citation>
    <scope>IDENTIFICATION BY MASS SPECTROMETRY [LARGE SCALE ANALYSIS]</scope>
    <source>
        <tissue>Testis</tissue>
    </source>
</reference>
<reference key="7">
    <citation type="journal article" date="2016" name="Arterioscler. Thromb. Vasc. Biol.">
        <title>The Protein Acyl Transferase ZDHHC21 Modulates alpha1 Adrenergic Receptor Function and Regulates Hemodynamics.</title>
        <authorList>
            <person name="Marin E.P."/>
            <person name="Jozsef L."/>
            <person name="Di Lorenzo A."/>
            <person name="Held K.F."/>
            <person name="Luciano A.K."/>
            <person name="Melendez J."/>
            <person name="Milstone L.M."/>
            <person name="Velazquez H."/>
            <person name="Sessa W.C."/>
        </authorList>
    </citation>
    <scope>FUNCTION</scope>
    <scope>CATALYTIC ACTIVITY</scope>
    <scope>DISEASE</scope>
    <scope>TISSUE SPECIFICITY</scope>
    <scope>MUTAGENESIS OF CYS-120 AND PHE-233</scope>
    <scope>ACTIVE SITE</scope>
</reference>
<reference key="8">
    <citation type="journal article" date="2016" name="Nat. Commun.">
        <title>Palmitoyl acyltransferase DHHC21 mediates endothelial dysfunction in systemic inflammatory response syndrome.</title>
        <authorList>
            <person name="Beard R.S. Jr."/>
            <person name="Yang X."/>
            <person name="Meegan J.E."/>
            <person name="Overstreet J.W."/>
            <person name="Yang C.G."/>
            <person name="Elliott J.A."/>
            <person name="Reynolds J.J."/>
            <person name="Cha B.J."/>
            <person name="Pivetti C.D."/>
            <person name="Mitchell D.A."/>
            <person name="Wu M.H."/>
            <person name="Deschenes R.J."/>
            <person name="Yuan S.Y."/>
        </authorList>
    </citation>
    <scope>FUNCTION</scope>
    <scope>CATALYTIC ACTIVITY</scope>
    <scope>DISEASE</scope>
</reference>
<gene>
    <name evidence="12" type="primary">Zdhhc21</name>
    <name evidence="8" type="synonym">Gramp3</name>
</gene>
<name>ZDH21_MOUSE</name>
<evidence type="ECO:0000250" key="1">
    <source>
        <dbReference type="UniProtKB" id="Q8IUH5"/>
    </source>
</evidence>
<evidence type="ECO:0000250" key="2">
    <source>
        <dbReference type="UniProtKB" id="Q8IVQ6"/>
    </source>
</evidence>
<evidence type="ECO:0000255" key="3"/>
<evidence type="ECO:0000255" key="4">
    <source>
        <dbReference type="PROSITE-ProRule" id="PRU00067"/>
    </source>
</evidence>
<evidence type="ECO:0000269" key="5">
    <source>
    </source>
</evidence>
<evidence type="ECO:0000269" key="6">
    <source>
    </source>
</evidence>
<evidence type="ECO:0000269" key="7">
    <source>
    </source>
</evidence>
<evidence type="ECO:0000303" key="8">
    <source>
    </source>
</evidence>
<evidence type="ECO:0000303" key="9">
    <source>
    </source>
</evidence>
<evidence type="ECO:0000305" key="10"/>
<evidence type="ECO:0000305" key="11">
    <source>
    </source>
</evidence>
<evidence type="ECO:0000312" key="12">
    <source>
        <dbReference type="MGI" id="MGI:1915518"/>
    </source>
</evidence>
<protein>
    <recommendedName>
        <fullName evidence="11">Palmitoyltransferase ZDHHC21</fullName>
        <ecNumber evidence="5 6 7">2.3.1.225</ecNumber>
    </recommendedName>
    <alternativeName>
        <fullName evidence="9">DHHC domain-containing cysteine-rich protein 21</fullName>
        <shortName evidence="9">DHHC21</shortName>
    </alternativeName>
    <alternativeName>
        <fullName evidence="8">GABA-A receptor-associated membrane protein 3</fullName>
    </alternativeName>
    <alternativeName>
        <fullName evidence="12">Zinc finger DHHC domain-containing protein 21</fullName>
    </alternativeName>
</protein>
<sequence length="265" mass="31331">MGLRIHFVVDPHGWCCMGLIVFVWLYNIVIIPKIVLFPHYEEGHIPGILIIIFYGISIFCLVALVRASLTDPGRLPENPKIPHAERELWELCNKCNLMRPKRSHHCSRCGHCVRRMDHHCPWINNCVGEDNHWLFLQLCFYTELLTCYALMFSFCHYYYFLPLKKRNLDLFVVRHELAIMRLAAFMGITMLVGITGLFYTQLIGIITDTTSIEKMSNCCEEISRPRKPWQQTFSEVFGTRWKILWFIPFRQRQPLRVPYHFANHV</sequence>
<comment type="function">
    <text evidence="2 5 6 7">Palmitoyltransferase that catalyzes the addition of palmitate onto various protein substrates (PubMed:19956733, PubMed:26715683, PubMed:27653213). Palmitoylates sex steroid hormone receptors, including ESR1, PGR and AR, thereby regulating their targeting to the plasma membrane. This affects rapid intracellular signaling by sex hormones via ERK and AKT kinases and the generation of cAMP, but does not affect that mediated by their nuclear receptor (By similarity). Palmitoylates FYN, regulates its localization in hair follicles and plays a key role in epidermal homeostasis and hair follicle differentiation (PubMed:19956733). Through the palmitoylation of PLCB1 and the regulation of PLCB1 downstream signaling may indirectly regulate the function of the endothelial barrier and the adhesion of leukocytes to the endothelium (PubMed:27653213). Also has a palmitoyltransferase activity toward ADRA1D, positively regulating its activity and expression and may thereby play a role in vascular contraction (PubMed:26715683). May also palmitoylate eNOS and LCK (PubMed:19956733).</text>
</comment>
<comment type="catalytic activity">
    <reaction evidence="5 6 7">
        <text>L-cysteinyl-[protein] + hexadecanoyl-CoA = S-hexadecanoyl-L-cysteinyl-[protein] + CoA</text>
        <dbReference type="Rhea" id="RHEA:36683"/>
        <dbReference type="Rhea" id="RHEA-COMP:10131"/>
        <dbReference type="Rhea" id="RHEA-COMP:11032"/>
        <dbReference type="ChEBI" id="CHEBI:29950"/>
        <dbReference type="ChEBI" id="CHEBI:57287"/>
        <dbReference type="ChEBI" id="CHEBI:57379"/>
        <dbReference type="ChEBI" id="CHEBI:74151"/>
        <dbReference type="EC" id="2.3.1.225"/>
    </reaction>
    <physiologicalReaction direction="left-to-right" evidence="5">
        <dbReference type="Rhea" id="RHEA:36684"/>
    </physiologicalReaction>
</comment>
<comment type="subcellular location">
    <subcellularLocation>
        <location evidence="2">Golgi apparatus membrane</location>
        <topology evidence="3">Multi-pass membrane protein</topology>
    </subcellularLocation>
    <subcellularLocation>
        <location evidence="5">Golgi apparatus</location>
        <location evidence="5">cis-Golgi network membrane</location>
        <topology evidence="3">Multi-pass membrane protein</topology>
    </subcellularLocation>
    <subcellularLocation>
        <location evidence="2">Cell membrane</location>
        <topology evidence="3">Multi-pass membrane protein</topology>
    </subcellularLocation>
</comment>
<comment type="tissue specificity">
    <text evidence="5 6">Widely expressed (PubMed:26715683). Expressed in Henle's layer within the hair bulb and the hair shaft cuticle (at protein level) (PubMed:19956733). Expression is limited to the post-mitotic lineages of inner root sheath (IRS) and cuticle (PubMed:19956733).</text>
</comment>
<comment type="developmental stage">
    <text evidence="5">In the developing skin, expression is not be detected prior to hair follicle induction (13 dpc). Expression is initially detected in the inner root sheath (IRS) of developing vibrissae follicles at 16 dpc and later in the developing IRS of 18.5 dpc pelage follicles.</text>
</comment>
<comment type="domain">
    <text evidence="1">The DHHC domain is required for palmitoyltransferase activity.</text>
</comment>
<comment type="disease">
    <text evidence="5 6 7">Defects in zdhhc21 are the cause of the depilated (dep) phenotype. It is a recessive phenotype characterized by variable hair loss, with thinner and shorter hairs remaining in a greasy coat which is due to a defect in the epidermis, rather than the dermis (PubMed:19956733). Depilated (dep) mutant mice are protected against endothelial dysfunction in systemic inflammatory response syndrome (PubMed:27653213). They are also tachycardic and hypotensive (PubMed:26715683).</text>
</comment>
<comment type="similarity">
    <text evidence="10">Belongs to the DHHC palmitoyltransferase family.</text>
</comment>
<organism>
    <name type="scientific">Mus musculus</name>
    <name type="common">Mouse</name>
    <dbReference type="NCBI Taxonomy" id="10090"/>
    <lineage>
        <taxon>Eukaryota</taxon>
        <taxon>Metazoa</taxon>
        <taxon>Chordata</taxon>
        <taxon>Craniata</taxon>
        <taxon>Vertebrata</taxon>
        <taxon>Euteleostomi</taxon>
        <taxon>Mammalia</taxon>
        <taxon>Eutheria</taxon>
        <taxon>Euarchontoglires</taxon>
        <taxon>Glires</taxon>
        <taxon>Rodentia</taxon>
        <taxon>Myomorpha</taxon>
        <taxon>Muroidea</taxon>
        <taxon>Muridae</taxon>
        <taxon>Murinae</taxon>
        <taxon>Mus</taxon>
        <taxon>Mus</taxon>
    </lineage>
</organism>
<feature type="chain" id="PRO_0000212909" description="Palmitoyltransferase ZDHHC21">
    <location>
        <begin position="1"/>
        <end position="265"/>
    </location>
</feature>
<feature type="topological domain" description="Cytoplasmic" evidence="10">
    <location>
        <begin position="1"/>
        <end position="16"/>
    </location>
</feature>
<feature type="transmembrane region" description="Helical" evidence="3">
    <location>
        <begin position="17"/>
        <end position="37"/>
    </location>
</feature>
<feature type="topological domain" description="Extracellular" evidence="10">
    <location>
        <begin position="38"/>
        <end position="44"/>
    </location>
</feature>
<feature type="transmembrane region" description="Helical" evidence="3">
    <location>
        <begin position="45"/>
        <end position="65"/>
    </location>
</feature>
<feature type="topological domain" description="Cytoplasmic" evidence="10">
    <location>
        <begin position="66"/>
        <end position="133"/>
    </location>
</feature>
<feature type="transmembrane region" description="Helical" evidence="3">
    <location>
        <begin position="134"/>
        <end position="154"/>
    </location>
</feature>
<feature type="topological domain" description="Extracellular" evidence="10">
    <location>
        <begin position="155"/>
        <end position="185"/>
    </location>
</feature>
<feature type="transmembrane region" description="Helical" evidence="3">
    <location>
        <begin position="186"/>
        <end position="206"/>
    </location>
</feature>
<feature type="topological domain" description="Cytoplasmic" evidence="10">
    <location>
        <begin position="207"/>
        <end position="265"/>
    </location>
</feature>
<feature type="domain" description="DHHC" evidence="4">
    <location>
        <begin position="90"/>
        <end position="140"/>
    </location>
</feature>
<feature type="active site" description="S-palmitoyl cysteine intermediate" evidence="5 6">
    <location>
        <position position="120"/>
    </location>
</feature>
<feature type="mutagenesis site" description="No effect on protein-cysteine S-palmitoyltransferase activity. No effect on localization to the cis-Golgi network." evidence="5">
    <original>L</original>
    <variation>F</variation>
    <location>
        <position position="91"/>
    </location>
</feature>
<feature type="mutagenesis site" description="Loss of protein-cysteine S-palmitoyltransferase activity. Decreased localization to the cis-Golgi network. Relocalized to the endoplasmic reticulum." evidence="5">
    <original>C</original>
    <variation>S</variation>
    <location>
        <position position="95"/>
    </location>
</feature>
<feature type="mutagenesis site" description="Loss of protein-cysteine S-palmitoyltransferase activity. Decreased localization to the cis-Golgi network. Relocalized to the endoplasmic reticulum." evidence="5">
    <original>C</original>
    <variation>S</variation>
    <location>
        <position position="106"/>
    </location>
</feature>
<feature type="mutagenesis site" description="Loss of protein-cysteine S-palmitoyltransferase activity. Decreased localization to the cis-Golgi network. Relocalized to the endoplasmic reticulum." evidence="5 6">
    <original>C</original>
    <variation>S</variation>
    <location>
        <position position="120"/>
    </location>
</feature>
<feature type="mutagenesis site" description="In depilated (dep) mutant mice. Loss of protein-cysteine S-palmitoyltransferase activity. Relocalized to the endoplasmic reticulum." evidence="5 6">
    <location>
        <position position="233"/>
    </location>
</feature>
<feature type="sequence conflict" description="In Ref. 1; AAO27361 and 2; BAB32059." evidence="10" ref="1 2">
    <original>A</original>
    <variation>T</variation>
    <location>
        <position position="67"/>
    </location>
</feature>
<proteinExistence type="evidence at protein level"/>
<keyword id="KW-0012">Acyltransferase</keyword>
<keyword id="KW-1003">Cell membrane</keyword>
<keyword id="KW-0333">Golgi apparatus</keyword>
<keyword id="KW-0449">Lipoprotein</keyword>
<keyword id="KW-0472">Membrane</keyword>
<keyword id="KW-0564">Palmitate</keyword>
<keyword id="KW-1185">Reference proteome</keyword>
<keyword id="KW-0808">Transferase</keyword>
<keyword id="KW-0812">Transmembrane</keyword>
<keyword id="KW-1133">Transmembrane helix</keyword>